<accession>C3PP99</accession>
<comment type="similarity">
    <text evidence="1">Belongs to the universal ribosomal protein uL29 family.</text>
</comment>
<evidence type="ECO:0000255" key="1">
    <source>
        <dbReference type="HAMAP-Rule" id="MF_00374"/>
    </source>
</evidence>
<evidence type="ECO:0000305" key="2"/>
<keyword id="KW-0687">Ribonucleoprotein</keyword>
<keyword id="KW-0689">Ribosomal protein</keyword>
<protein>
    <recommendedName>
        <fullName evidence="1">Large ribosomal subunit protein uL29</fullName>
    </recommendedName>
    <alternativeName>
        <fullName evidence="2">50S ribosomal protein L29</fullName>
    </alternativeName>
</protein>
<proteinExistence type="inferred from homology"/>
<gene>
    <name evidence="1" type="primary">rpmC</name>
    <name type="ordered locus">RAF_ORF0904</name>
</gene>
<feature type="chain" id="PRO_1000205636" description="Large ribosomal subunit protein uL29">
    <location>
        <begin position="1"/>
        <end position="71"/>
    </location>
</feature>
<sequence length="71" mass="8376">MNDLKLLRSKLSTETIEELYKNLNLLKKELFNLRFQQALGDLKNTSRFSLVKKSIARIKTELTKRANSEEY</sequence>
<dbReference type="EMBL" id="CP001612">
    <property type="protein sequence ID" value="ACP53759.1"/>
    <property type="molecule type" value="Genomic_DNA"/>
</dbReference>
<dbReference type="RefSeq" id="WP_004997809.1">
    <property type="nucleotide sequence ID" value="NC_012633.1"/>
</dbReference>
<dbReference type="SMR" id="C3PP99"/>
<dbReference type="GeneID" id="95361478"/>
<dbReference type="KEGG" id="raf:RAF_ORF0904"/>
<dbReference type="HOGENOM" id="CLU_158491_1_0_5"/>
<dbReference type="Proteomes" id="UP000002305">
    <property type="component" value="Chromosome"/>
</dbReference>
<dbReference type="GO" id="GO:0022625">
    <property type="term" value="C:cytosolic large ribosomal subunit"/>
    <property type="evidence" value="ECO:0007669"/>
    <property type="project" value="TreeGrafter"/>
</dbReference>
<dbReference type="GO" id="GO:0003735">
    <property type="term" value="F:structural constituent of ribosome"/>
    <property type="evidence" value="ECO:0007669"/>
    <property type="project" value="InterPro"/>
</dbReference>
<dbReference type="GO" id="GO:0006412">
    <property type="term" value="P:translation"/>
    <property type="evidence" value="ECO:0007669"/>
    <property type="project" value="UniProtKB-UniRule"/>
</dbReference>
<dbReference type="CDD" id="cd00427">
    <property type="entry name" value="Ribosomal_L29_HIP"/>
    <property type="match status" value="1"/>
</dbReference>
<dbReference type="FunFam" id="1.10.287.310:FF:000001">
    <property type="entry name" value="50S ribosomal protein L29"/>
    <property type="match status" value="1"/>
</dbReference>
<dbReference type="Gene3D" id="1.10.287.310">
    <property type="match status" value="1"/>
</dbReference>
<dbReference type="HAMAP" id="MF_00374">
    <property type="entry name" value="Ribosomal_uL29"/>
    <property type="match status" value="1"/>
</dbReference>
<dbReference type="InterPro" id="IPR050063">
    <property type="entry name" value="Ribosomal_protein_uL29"/>
</dbReference>
<dbReference type="InterPro" id="IPR001854">
    <property type="entry name" value="Ribosomal_uL29"/>
</dbReference>
<dbReference type="InterPro" id="IPR018254">
    <property type="entry name" value="Ribosomal_uL29_CS"/>
</dbReference>
<dbReference type="InterPro" id="IPR036049">
    <property type="entry name" value="Ribosomal_uL29_sf"/>
</dbReference>
<dbReference type="NCBIfam" id="TIGR00012">
    <property type="entry name" value="L29"/>
    <property type="match status" value="1"/>
</dbReference>
<dbReference type="PANTHER" id="PTHR10916">
    <property type="entry name" value="60S RIBOSOMAL PROTEIN L35/50S RIBOSOMAL PROTEIN L29"/>
    <property type="match status" value="1"/>
</dbReference>
<dbReference type="PANTHER" id="PTHR10916:SF0">
    <property type="entry name" value="LARGE RIBOSOMAL SUBUNIT PROTEIN UL29C"/>
    <property type="match status" value="1"/>
</dbReference>
<dbReference type="Pfam" id="PF00831">
    <property type="entry name" value="Ribosomal_L29"/>
    <property type="match status" value="1"/>
</dbReference>
<dbReference type="SUPFAM" id="SSF46561">
    <property type="entry name" value="Ribosomal protein L29 (L29p)"/>
    <property type="match status" value="1"/>
</dbReference>
<dbReference type="PROSITE" id="PS00579">
    <property type="entry name" value="RIBOSOMAL_L29"/>
    <property type="match status" value="1"/>
</dbReference>
<organism>
    <name type="scientific">Rickettsia africae (strain ESF-5)</name>
    <dbReference type="NCBI Taxonomy" id="347255"/>
    <lineage>
        <taxon>Bacteria</taxon>
        <taxon>Pseudomonadati</taxon>
        <taxon>Pseudomonadota</taxon>
        <taxon>Alphaproteobacteria</taxon>
        <taxon>Rickettsiales</taxon>
        <taxon>Rickettsiaceae</taxon>
        <taxon>Rickettsieae</taxon>
        <taxon>Rickettsia</taxon>
        <taxon>spotted fever group</taxon>
    </lineage>
</organism>
<reference key="1">
    <citation type="journal article" date="2009" name="BMC Genomics">
        <title>Analysis of the Rickettsia africae genome reveals that virulence acquisition in Rickettsia species may be explained by genome reduction.</title>
        <authorList>
            <person name="Fournier P.-E."/>
            <person name="El Karkouri K."/>
            <person name="Leroy Q."/>
            <person name="Robert C."/>
            <person name="Giumelli B."/>
            <person name="Renesto P."/>
            <person name="Socolovschi C."/>
            <person name="Parola P."/>
            <person name="Audic S."/>
            <person name="Raoult D."/>
        </authorList>
    </citation>
    <scope>NUCLEOTIDE SEQUENCE [LARGE SCALE GENOMIC DNA]</scope>
    <source>
        <strain>ESF-5</strain>
    </source>
</reference>
<name>RL29_RICAE</name>